<accession>A9N3N3</accession>
<evidence type="ECO:0000255" key="1">
    <source>
        <dbReference type="HAMAP-Rule" id="MF_00259"/>
    </source>
</evidence>
<dbReference type="EC" id="2.1.2.10" evidence="1"/>
<dbReference type="EMBL" id="CP000886">
    <property type="protein sequence ID" value="ABX69137.1"/>
    <property type="molecule type" value="Genomic_DNA"/>
</dbReference>
<dbReference type="RefSeq" id="WP_000068742.1">
    <property type="nucleotide sequence ID" value="NC_010102.1"/>
</dbReference>
<dbReference type="SMR" id="A9N3N3"/>
<dbReference type="KEGG" id="spq:SPAB_03805"/>
<dbReference type="PATRIC" id="fig|1016998.12.peg.3585"/>
<dbReference type="HOGENOM" id="CLU_007884_10_2_6"/>
<dbReference type="BioCyc" id="SENT1016998:SPAB_RS15485-MONOMER"/>
<dbReference type="Proteomes" id="UP000008556">
    <property type="component" value="Chromosome"/>
</dbReference>
<dbReference type="GO" id="GO:0005829">
    <property type="term" value="C:cytosol"/>
    <property type="evidence" value="ECO:0007669"/>
    <property type="project" value="TreeGrafter"/>
</dbReference>
<dbReference type="GO" id="GO:0005960">
    <property type="term" value="C:glycine cleavage complex"/>
    <property type="evidence" value="ECO:0007669"/>
    <property type="project" value="InterPro"/>
</dbReference>
<dbReference type="GO" id="GO:0004047">
    <property type="term" value="F:aminomethyltransferase activity"/>
    <property type="evidence" value="ECO:0007669"/>
    <property type="project" value="UniProtKB-UniRule"/>
</dbReference>
<dbReference type="GO" id="GO:0008483">
    <property type="term" value="F:transaminase activity"/>
    <property type="evidence" value="ECO:0007669"/>
    <property type="project" value="UniProtKB-KW"/>
</dbReference>
<dbReference type="GO" id="GO:0019464">
    <property type="term" value="P:glycine decarboxylation via glycine cleavage system"/>
    <property type="evidence" value="ECO:0007669"/>
    <property type="project" value="UniProtKB-UniRule"/>
</dbReference>
<dbReference type="FunFam" id="2.40.30.110:FF:000001">
    <property type="entry name" value="Aminomethyltransferase"/>
    <property type="match status" value="1"/>
</dbReference>
<dbReference type="FunFam" id="3.30.70.1400:FF:000001">
    <property type="entry name" value="Aminomethyltransferase"/>
    <property type="match status" value="1"/>
</dbReference>
<dbReference type="FunFam" id="4.10.1250.10:FF:000001">
    <property type="entry name" value="Aminomethyltransferase"/>
    <property type="match status" value="1"/>
</dbReference>
<dbReference type="Gene3D" id="2.40.30.110">
    <property type="entry name" value="Aminomethyltransferase beta-barrel domains"/>
    <property type="match status" value="1"/>
</dbReference>
<dbReference type="Gene3D" id="3.30.70.1400">
    <property type="entry name" value="Aminomethyltransferase beta-barrel domains"/>
    <property type="match status" value="1"/>
</dbReference>
<dbReference type="Gene3D" id="4.10.1250.10">
    <property type="entry name" value="Aminomethyltransferase fragment"/>
    <property type="match status" value="1"/>
</dbReference>
<dbReference type="Gene3D" id="3.30.1360.120">
    <property type="entry name" value="Probable tRNA modification gtpase trme, domain 1"/>
    <property type="match status" value="1"/>
</dbReference>
<dbReference type="HAMAP" id="MF_00259">
    <property type="entry name" value="GcvT"/>
    <property type="match status" value="1"/>
</dbReference>
<dbReference type="InterPro" id="IPR006223">
    <property type="entry name" value="GCS_T"/>
</dbReference>
<dbReference type="InterPro" id="IPR022903">
    <property type="entry name" value="GCS_T_bac"/>
</dbReference>
<dbReference type="InterPro" id="IPR013977">
    <property type="entry name" value="GCST_C"/>
</dbReference>
<dbReference type="InterPro" id="IPR006222">
    <property type="entry name" value="GCV_T_N"/>
</dbReference>
<dbReference type="InterPro" id="IPR028896">
    <property type="entry name" value="GcvT/YgfZ/DmdA"/>
</dbReference>
<dbReference type="InterPro" id="IPR029043">
    <property type="entry name" value="GcvT/YgfZ_C"/>
</dbReference>
<dbReference type="InterPro" id="IPR027266">
    <property type="entry name" value="TrmE/GcvT_dom1"/>
</dbReference>
<dbReference type="NCBIfam" id="TIGR00528">
    <property type="entry name" value="gcvT"/>
    <property type="match status" value="1"/>
</dbReference>
<dbReference type="NCBIfam" id="NF001567">
    <property type="entry name" value="PRK00389.1"/>
    <property type="match status" value="1"/>
</dbReference>
<dbReference type="PANTHER" id="PTHR43757">
    <property type="entry name" value="AMINOMETHYLTRANSFERASE"/>
    <property type="match status" value="1"/>
</dbReference>
<dbReference type="PANTHER" id="PTHR43757:SF2">
    <property type="entry name" value="AMINOMETHYLTRANSFERASE, MITOCHONDRIAL"/>
    <property type="match status" value="1"/>
</dbReference>
<dbReference type="Pfam" id="PF01571">
    <property type="entry name" value="GCV_T"/>
    <property type="match status" value="1"/>
</dbReference>
<dbReference type="Pfam" id="PF08669">
    <property type="entry name" value="GCV_T_C"/>
    <property type="match status" value="1"/>
</dbReference>
<dbReference type="PIRSF" id="PIRSF006487">
    <property type="entry name" value="GcvT"/>
    <property type="match status" value="1"/>
</dbReference>
<dbReference type="SUPFAM" id="SSF101790">
    <property type="entry name" value="Aminomethyltransferase beta-barrel domain"/>
    <property type="match status" value="1"/>
</dbReference>
<dbReference type="SUPFAM" id="SSF103025">
    <property type="entry name" value="Folate-binding domain"/>
    <property type="match status" value="1"/>
</dbReference>
<name>GCST_SALPB</name>
<sequence length="364" mass="40231">MAQQTPLYEQHTLCGARMVDFHGWMMPLHYGSQLDEHHAVRTDAGMFDVSHMTIVDLHGSRTREFLRYLLANDVAKLTKTGKALYSGMLNASGGVIDDLIVYYFTEDFFRLVVNSATREKDLSWITQHAEPYAIDITVRDDLSLIAVQGPNAQEKAATLFTEQQRHAVEGMKPFFGVQAGDLFIATTGYTGEAGYEIAMPNEKAADFWRALVEAGVKPCGLGARDTLRLEAGMNLYGQEMDEGISPLAANMGWTIAWEPADRDFIGREALEMQREKGHEQLVGLVMTEKGVLRNELPVRFTDAQGNQQEGIITSGTFSPTLGYSIALARVPAGIGETAIVQIRNREMPVKVTKPVFVRNGKAVA</sequence>
<proteinExistence type="inferred from homology"/>
<protein>
    <recommendedName>
        <fullName evidence="1">Aminomethyltransferase</fullName>
        <ecNumber evidence="1">2.1.2.10</ecNumber>
    </recommendedName>
    <alternativeName>
        <fullName evidence="1">Glycine cleavage system T protein</fullName>
    </alternativeName>
</protein>
<reference key="1">
    <citation type="submission" date="2007-11" db="EMBL/GenBank/DDBJ databases">
        <authorList>
            <consortium name="The Salmonella enterica serovar Paratyphi B Genome Sequencing Project"/>
            <person name="McClelland M."/>
            <person name="Sanderson E.K."/>
            <person name="Porwollik S."/>
            <person name="Spieth J."/>
            <person name="Clifton W.S."/>
            <person name="Fulton R."/>
            <person name="Cordes M."/>
            <person name="Wollam A."/>
            <person name="Shah N."/>
            <person name="Pepin K."/>
            <person name="Bhonagiri V."/>
            <person name="Nash W."/>
            <person name="Johnson M."/>
            <person name="Thiruvilangam P."/>
            <person name="Wilson R."/>
        </authorList>
    </citation>
    <scope>NUCLEOTIDE SEQUENCE [LARGE SCALE GENOMIC DNA]</scope>
    <source>
        <strain>ATCC BAA-1250 / SPB7</strain>
    </source>
</reference>
<feature type="chain" id="PRO_1000078590" description="Aminomethyltransferase">
    <location>
        <begin position="1"/>
        <end position="364"/>
    </location>
</feature>
<keyword id="KW-0032">Aminotransferase</keyword>
<keyword id="KW-0808">Transferase</keyword>
<gene>
    <name evidence="1" type="primary">gcvT</name>
    <name type="ordered locus">SPAB_03805</name>
</gene>
<comment type="function">
    <text evidence="1">The glycine cleavage system catalyzes the degradation of glycine.</text>
</comment>
<comment type="catalytic activity">
    <reaction evidence="1">
        <text>N(6)-[(R)-S(8)-aminomethyldihydrolipoyl]-L-lysyl-[protein] + (6S)-5,6,7,8-tetrahydrofolate = N(6)-[(R)-dihydrolipoyl]-L-lysyl-[protein] + (6R)-5,10-methylene-5,6,7,8-tetrahydrofolate + NH4(+)</text>
        <dbReference type="Rhea" id="RHEA:16945"/>
        <dbReference type="Rhea" id="RHEA-COMP:10475"/>
        <dbReference type="Rhea" id="RHEA-COMP:10492"/>
        <dbReference type="ChEBI" id="CHEBI:15636"/>
        <dbReference type="ChEBI" id="CHEBI:28938"/>
        <dbReference type="ChEBI" id="CHEBI:57453"/>
        <dbReference type="ChEBI" id="CHEBI:83100"/>
        <dbReference type="ChEBI" id="CHEBI:83143"/>
        <dbReference type="EC" id="2.1.2.10"/>
    </reaction>
</comment>
<comment type="subunit">
    <text evidence="1">The glycine cleavage system is composed of four proteins: P, T, L and H.</text>
</comment>
<comment type="similarity">
    <text evidence="1">Belongs to the GcvT family.</text>
</comment>
<organism>
    <name type="scientific">Salmonella paratyphi B (strain ATCC BAA-1250 / SPB7)</name>
    <dbReference type="NCBI Taxonomy" id="1016998"/>
    <lineage>
        <taxon>Bacteria</taxon>
        <taxon>Pseudomonadati</taxon>
        <taxon>Pseudomonadota</taxon>
        <taxon>Gammaproteobacteria</taxon>
        <taxon>Enterobacterales</taxon>
        <taxon>Enterobacteriaceae</taxon>
        <taxon>Salmonella</taxon>
    </lineage>
</organism>